<evidence type="ECO:0000255" key="1">
    <source>
        <dbReference type="HAMAP-Rule" id="MF_00074"/>
    </source>
</evidence>
<name>RSMG_LYSSC</name>
<keyword id="KW-0963">Cytoplasm</keyword>
<keyword id="KW-0489">Methyltransferase</keyword>
<keyword id="KW-0698">rRNA processing</keyword>
<keyword id="KW-0949">S-adenosyl-L-methionine</keyword>
<keyword id="KW-0808">Transferase</keyword>
<comment type="function">
    <text evidence="1">Specifically methylates the N7 position of guanine in position 535 of 16S rRNA.</text>
</comment>
<comment type="subcellular location">
    <subcellularLocation>
        <location evidence="1">Cytoplasm</location>
    </subcellularLocation>
</comment>
<comment type="similarity">
    <text evidence="1">Belongs to the methyltransferase superfamily. RNA methyltransferase RsmG family.</text>
</comment>
<accession>B1HPM1</accession>
<proteinExistence type="inferred from homology"/>
<protein>
    <recommendedName>
        <fullName evidence="1">Ribosomal RNA small subunit methyltransferase G</fullName>
        <ecNumber evidence="1">2.1.1.-</ecNumber>
    </recommendedName>
    <alternativeName>
        <fullName evidence="1">16S rRNA 7-methylguanosine methyltransferase</fullName>
        <shortName evidence="1">16S rRNA m7G methyltransferase</shortName>
    </alternativeName>
</protein>
<dbReference type="EC" id="2.1.1.-" evidence="1"/>
<dbReference type="EMBL" id="CP000817">
    <property type="protein sequence ID" value="ACA42223.1"/>
    <property type="molecule type" value="Genomic_DNA"/>
</dbReference>
<dbReference type="RefSeq" id="WP_012296221.1">
    <property type="nucleotide sequence ID" value="NC_010382.1"/>
</dbReference>
<dbReference type="SMR" id="B1HPM1"/>
<dbReference type="EnsemblBacteria" id="ACA42223">
    <property type="protein sequence ID" value="ACA42223"/>
    <property type="gene ID" value="Bsph_4779"/>
</dbReference>
<dbReference type="KEGG" id="lsp:Bsph_4779"/>
<dbReference type="HOGENOM" id="CLU_065341_0_2_9"/>
<dbReference type="Proteomes" id="UP000002164">
    <property type="component" value="Chromosome"/>
</dbReference>
<dbReference type="GO" id="GO:0005829">
    <property type="term" value="C:cytosol"/>
    <property type="evidence" value="ECO:0007669"/>
    <property type="project" value="TreeGrafter"/>
</dbReference>
<dbReference type="GO" id="GO:0070043">
    <property type="term" value="F:rRNA (guanine-N7-)-methyltransferase activity"/>
    <property type="evidence" value="ECO:0007669"/>
    <property type="project" value="UniProtKB-UniRule"/>
</dbReference>
<dbReference type="CDD" id="cd02440">
    <property type="entry name" value="AdoMet_MTases"/>
    <property type="match status" value="1"/>
</dbReference>
<dbReference type="FunFam" id="3.40.50.150:FF:000041">
    <property type="entry name" value="Ribosomal RNA small subunit methyltransferase G"/>
    <property type="match status" value="1"/>
</dbReference>
<dbReference type="Gene3D" id="3.40.50.150">
    <property type="entry name" value="Vaccinia Virus protein VP39"/>
    <property type="match status" value="1"/>
</dbReference>
<dbReference type="HAMAP" id="MF_00074">
    <property type="entry name" value="16SrRNA_methyltr_G"/>
    <property type="match status" value="1"/>
</dbReference>
<dbReference type="InterPro" id="IPR003682">
    <property type="entry name" value="rRNA_ssu_MeTfrase_G"/>
</dbReference>
<dbReference type="InterPro" id="IPR029063">
    <property type="entry name" value="SAM-dependent_MTases_sf"/>
</dbReference>
<dbReference type="NCBIfam" id="TIGR00138">
    <property type="entry name" value="rsmG_gidB"/>
    <property type="match status" value="1"/>
</dbReference>
<dbReference type="PANTHER" id="PTHR31760">
    <property type="entry name" value="S-ADENOSYL-L-METHIONINE-DEPENDENT METHYLTRANSFERASES SUPERFAMILY PROTEIN"/>
    <property type="match status" value="1"/>
</dbReference>
<dbReference type="PANTHER" id="PTHR31760:SF0">
    <property type="entry name" value="S-ADENOSYL-L-METHIONINE-DEPENDENT METHYLTRANSFERASES SUPERFAMILY PROTEIN"/>
    <property type="match status" value="1"/>
</dbReference>
<dbReference type="Pfam" id="PF02527">
    <property type="entry name" value="GidB"/>
    <property type="match status" value="1"/>
</dbReference>
<dbReference type="PIRSF" id="PIRSF003078">
    <property type="entry name" value="GidB"/>
    <property type="match status" value="1"/>
</dbReference>
<dbReference type="SUPFAM" id="SSF53335">
    <property type="entry name" value="S-adenosyl-L-methionine-dependent methyltransferases"/>
    <property type="match status" value="1"/>
</dbReference>
<reference key="1">
    <citation type="journal article" date="2008" name="J. Bacteriol.">
        <title>Complete genome sequence of the mosquitocidal bacterium Bacillus sphaericus C3-41 and comparison with those of closely related Bacillus species.</title>
        <authorList>
            <person name="Hu X."/>
            <person name="Fan W."/>
            <person name="Han B."/>
            <person name="Liu H."/>
            <person name="Zheng D."/>
            <person name="Li Q."/>
            <person name="Dong W."/>
            <person name="Yan J."/>
            <person name="Gao M."/>
            <person name="Berry C."/>
            <person name="Yuan Z."/>
        </authorList>
    </citation>
    <scope>NUCLEOTIDE SEQUENCE [LARGE SCALE GENOMIC DNA]</scope>
    <source>
        <strain>C3-41</strain>
    </source>
</reference>
<sequence length="238" mass="27059">MNEQQFIEALKKKGIELSEKQITQFKKYFELLVEWNEKMNLTAITDLEGVYLKHFFDSISASFYFDFSKVITVCDVGAGAGFPSIPIKICFPHLHVTIVDSLNKRITFLNHLSDELQLENMNFVHARAEEFGQNIKYREQYDVVTARAVARLSVLSELCVPLAKQGGYFVALKAAAGAEELKDAKKALTTLGVKLKEEYSFKLPVEESDRILYIFDKIKGTPKKYPRKPGVPNKTPIQ</sequence>
<gene>
    <name evidence="1" type="primary">rsmG</name>
    <name type="ordered locus">Bsph_4779</name>
</gene>
<organism>
    <name type="scientific">Lysinibacillus sphaericus (strain C3-41)</name>
    <dbReference type="NCBI Taxonomy" id="444177"/>
    <lineage>
        <taxon>Bacteria</taxon>
        <taxon>Bacillati</taxon>
        <taxon>Bacillota</taxon>
        <taxon>Bacilli</taxon>
        <taxon>Bacillales</taxon>
        <taxon>Bacillaceae</taxon>
        <taxon>Lysinibacillus</taxon>
    </lineage>
</organism>
<feature type="chain" id="PRO_1000092636" description="Ribosomal RNA small subunit methyltransferase G">
    <location>
        <begin position="1"/>
        <end position="238"/>
    </location>
</feature>
<feature type="binding site" evidence="1">
    <location>
        <position position="77"/>
    </location>
    <ligand>
        <name>S-adenosyl-L-methionine</name>
        <dbReference type="ChEBI" id="CHEBI:59789"/>
    </ligand>
</feature>
<feature type="binding site" evidence="1">
    <location>
        <position position="82"/>
    </location>
    <ligand>
        <name>S-adenosyl-L-methionine</name>
        <dbReference type="ChEBI" id="CHEBI:59789"/>
    </ligand>
</feature>
<feature type="binding site" evidence="1">
    <location>
        <begin position="128"/>
        <end position="129"/>
    </location>
    <ligand>
        <name>S-adenosyl-L-methionine</name>
        <dbReference type="ChEBI" id="CHEBI:59789"/>
    </ligand>
</feature>
<feature type="binding site" evidence="1">
    <location>
        <position position="147"/>
    </location>
    <ligand>
        <name>S-adenosyl-L-methionine</name>
        <dbReference type="ChEBI" id="CHEBI:59789"/>
    </ligand>
</feature>